<accession>C3LSJ0</accession>
<sequence length="288" mass="31863">MAGAKEIRTKIGSVKSTQKITKAMEMVAASKMRRSQDAMESSRPYAQTIRKVIGHVANASLEYRHPYLEEREAKRVGYIIISTDRGLCGGLNINLFKKAITDMQTWKEKGAQIELAIIGSKATAFFNNSGAKVAAQVSGLGDSPSLEDLIGSVGVMLKKYDKGELDRLYLVFNQFVNTMVQKPKIDQLLPLPKSDSEDMQRDHMWDYIYEPEPKPLLDALLLRFIESQVYQGVVENLACEQAARMVAMKAATDNASNLIDDLQLVYNKARQAAITQELSEIVGGAAAV</sequence>
<name>ATPG_VIBCM</name>
<gene>
    <name evidence="1" type="primary">atpG</name>
    <name type="ordered locus">VCM66_2685</name>
</gene>
<feature type="chain" id="PRO_1000148646" description="ATP synthase gamma chain">
    <location>
        <begin position="1"/>
        <end position="288"/>
    </location>
</feature>
<comment type="function">
    <text evidence="1">Produces ATP from ADP in the presence of a proton gradient across the membrane. The gamma chain is believed to be important in regulating ATPase activity and the flow of protons through the CF(0) complex.</text>
</comment>
<comment type="subunit">
    <text evidence="1">F-type ATPases have 2 components, CF(1) - the catalytic core - and CF(0) - the membrane proton channel. CF(1) has five subunits: alpha(3), beta(3), gamma(1), delta(1), epsilon(1). CF(0) has three main subunits: a, b and c.</text>
</comment>
<comment type="subcellular location">
    <subcellularLocation>
        <location evidence="1">Cell inner membrane</location>
        <topology evidence="1">Peripheral membrane protein</topology>
    </subcellularLocation>
</comment>
<comment type="similarity">
    <text evidence="1">Belongs to the ATPase gamma chain family.</text>
</comment>
<protein>
    <recommendedName>
        <fullName evidence="1">ATP synthase gamma chain</fullName>
    </recommendedName>
    <alternativeName>
        <fullName evidence="1">ATP synthase F1 sector gamma subunit</fullName>
    </alternativeName>
    <alternativeName>
        <fullName evidence="1">F-ATPase gamma subunit</fullName>
    </alternativeName>
</protein>
<dbReference type="EMBL" id="CP001233">
    <property type="protein sequence ID" value="ACP06977.1"/>
    <property type="molecule type" value="Genomic_DNA"/>
</dbReference>
<dbReference type="RefSeq" id="WP_000896515.1">
    <property type="nucleotide sequence ID" value="NC_012578.1"/>
</dbReference>
<dbReference type="SMR" id="C3LSJ0"/>
<dbReference type="GeneID" id="69721149"/>
<dbReference type="KEGG" id="vcm:VCM66_2685"/>
<dbReference type="HOGENOM" id="CLU_050669_0_1_6"/>
<dbReference type="Proteomes" id="UP000001217">
    <property type="component" value="Chromosome I"/>
</dbReference>
<dbReference type="GO" id="GO:0005886">
    <property type="term" value="C:plasma membrane"/>
    <property type="evidence" value="ECO:0007669"/>
    <property type="project" value="UniProtKB-SubCell"/>
</dbReference>
<dbReference type="GO" id="GO:0045259">
    <property type="term" value="C:proton-transporting ATP synthase complex"/>
    <property type="evidence" value="ECO:0007669"/>
    <property type="project" value="UniProtKB-KW"/>
</dbReference>
<dbReference type="GO" id="GO:0005524">
    <property type="term" value="F:ATP binding"/>
    <property type="evidence" value="ECO:0007669"/>
    <property type="project" value="UniProtKB-UniRule"/>
</dbReference>
<dbReference type="GO" id="GO:0046933">
    <property type="term" value="F:proton-transporting ATP synthase activity, rotational mechanism"/>
    <property type="evidence" value="ECO:0007669"/>
    <property type="project" value="UniProtKB-UniRule"/>
</dbReference>
<dbReference type="GO" id="GO:0042777">
    <property type="term" value="P:proton motive force-driven plasma membrane ATP synthesis"/>
    <property type="evidence" value="ECO:0007669"/>
    <property type="project" value="UniProtKB-UniRule"/>
</dbReference>
<dbReference type="CDD" id="cd12151">
    <property type="entry name" value="F1-ATPase_gamma"/>
    <property type="match status" value="1"/>
</dbReference>
<dbReference type="FunFam" id="1.10.287.80:FF:000005">
    <property type="entry name" value="ATP synthase gamma chain"/>
    <property type="match status" value="1"/>
</dbReference>
<dbReference type="FunFam" id="1.10.287.80:FF:000015">
    <property type="entry name" value="ATP synthase gamma chain"/>
    <property type="match status" value="1"/>
</dbReference>
<dbReference type="FunFam" id="3.40.1380.10:FF:000001">
    <property type="entry name" value="ATP synthase gamma chain"/>
    <property type="match status" value="1"/>
</dbReference>
<dbReference type="Gene3D" id="3.40.1380.10">
    <property type="match status" value="1"/>
</dbReference>
<dbReference type="Gene3D" id="1.10.287.80">
    <property type="entry name" value="ATP synthase, gamma subunit, helix hairpin domain"/>
    <property type="match status" value="2"/>
</dbReference>
<dbReference type="HAMAP" id="MF_00815">
    <property type="entry name" value="ATP_synth_gamma_bact"/>
    <property type="match status" value="1"/>
</dbReference>
<dbReference type="InterPro" id="IPR035968">
    <property type="entry name" value="ATP_synth_F1_ATPase_gsu"/>
</dbReference>
<dbReference type="InterPro" id="IPR000131">
    <property type="entry name" value="ATP_synth_F1_gsu"/>
</dbReference>
<dbReference type="InterPro" id="IPR023632">
    <property type="entry name" value="ATP_synth_F1_gsu_CS"/>
</dbReference>
<dbReference type="NCBIfam" id="TIGR01146">
    <property type="entry name" value="ATPsyn_F1gamma"/>
    <property type="match status" value="1"/>
</dbReference>
<dbReference type="NCBIfam" id="NF004144">
    <property type="entry name" value="PRK05621.1-1"/>
    <property type="match status" value="1"/>
</dbReference>
<dbReference type="PANTHER" id="PTHR11693">
    <property type="entry name" value="ATP SYNTHASE GAMMA CHAIN"/>
    <property type="match status" value="1"/>
</dbReference>
<dbReference type="PANTHER" id="PTHR11693:SF22">
    <property type="entry name" value="ATP SYNTHASE SUBUNIT GAMMA, MITOCHONDRIAL"/>
    <property type="match status" value="1"/>
</dbReference>
<dbReference type="Pfam" id="PF00231">
    <property type="entry name" value="ATP-synt"/>
    <property type="match status" value="1"/>
</dbReference>
<dbReference type="PRINTS" id="PR00126">
    <property type="entry name" value="ATPASEGAMMA"/>
</dbReference>
<dbReference type="SUPFAM" id="SSF52943">
    <property type="entry name" value="ATP synthase (F1-ATPase), gamma subunit"/>
    <property type="match status" value="1"/>
</dbReference>
<dbReference type="PROSITE" id="PS00153">
    <property type="entry name" value="ATPASE_GAMMA"/>
    <property type="match status" value="1"/>
</dbReference>
<organism>
    <name type="scientific">Vibrio cholerae serotype O1 (strain M66-2)</name>
    <dbReference type="NCBI Taxonomy" id="579112"/>
    <lineage>
        <taxon>Bacteria</taxon>
        <taxon>Pseudomonadati</taxon>
        <taxon>Pseudomonadota</taxon>
        <taxon>Gammaproteobacteria</taxon>
        <taxon>Vibrionales</taxon>
        <taxon>Vibrionaceae</taxon>
        <taxon>Vibrio</taxon>
    </lineage>
</organism>
<proteinExistence type="inferred from homology"/>
<evidence type="ECO:0000255" key="1">
    <source>
        <dbReference type="HAMAP-Rule" id="MF_00815"/>
    </source>
</evidence>
<keyword id="KW-0066">ATP synthesis</keyword>
<keyword id="KW-0997">Cell inner membrane</keyword>
<keyword id="KW-1003">Cell membrane</keyword>
<keyword id="KW-0139">CF(1)</keyword>
<keyword id="KW-0375">Hydrogen ion transport</keyword>
<keyword id="KW-0406">Ion transport</keyword>
<keyword id="KW-0472">Membrane</keyword>
<keyword id="KW-0813">Transport</keyword>
<reference key="1">
    <citation type="journal article" date="2008" name="PLoS ONE">
        <title>A recalibrated molecular clock and independent origins for the cholera pandemic clones.</title>
        <authorList>
            <person name="Feng L."/>
            <person name="Reeves P.R."/>
            <person name="Lan R."/>
            <person name="Ren Y."/>
            <person name="Gao C."/>
            <person name="Zhou Z."/>
            <person name="Ren Y."/>
            <person name="Cheng J."/>
            <person name="Wang W."/>
            <person name="Wang J."/>
            <person name="Qian W."/>
            <person name="Li D."/>
            <person name="Wang L."/>
        </authorList>
    </citation>
    <scope>NUCLEOTIDE SEQUENCE [LARGE SCALE GENOMIC DNA]</scope>
    <source>
        <strain>M66-2</strain>
    </source>
</reference>